<sequence>MRVLHVAPEAYPLAKVGGLADVVGALPKALGPLGVEAHVLLPWHGGLEARRVGEVAFAFFGREERAPLGERVEGGVRFLLLGVEGFGRERVYGYPDDAERYLRFALAAKEVARGYDLVHAHDWTAALLALYAPTVYTIHNLAHQGLVDPGLFFSWTGLPWSLFHMEALEFYGRVNLMKGGIVFARRVTTVSPSYAEEIQTPEFGMGLDGVLRRHAGKLRGILNGLDTEVFDPGKDPYLPAPYTREDPSGKARAKEAFRERTGLRPPVLAYVGRLDYQKGLDLVLKALPRLLEMGFRLYVQGVGDGGLQEAFLRAEEENPEGVRFLPAYDEAMARLAYAGAEAVLVPSRFEPCGLVQMIASRYGTPPVARAVGGLKDTVEDGRAGVLFETYHPEGLLYGVLRLFRLGAEEMGLRAMEKDFSWEGPARAYREVYREALG</sequence>
<name>GLGA_THET2</name>
<dbReference type="EC" id="2.4.1.21" evidence="1"/>
<dbReference type="EMBL" id="AE017221">
    <property type="protein sequence ID" value="AAS82322.1"/>
    <property type="status" value="ALT_INIT"/>
    <property type="molecule type" value="Genomic_DNA"/>
</dbReference>
<dbReference type="RefSeq" id="WP_011174330.1">
    <property type="nucleotide sequence ID" value="NZ_CP133179.1"/>
</dbReference>
<dbReference type="SMR" id="Q72G68"/>
<dbReference type="CAZy" id="GT5">
    <property type="family name" value="Glycosyltransferase Family 5"/>
</dbReference>
<dbReference type="KEGG" id="tth:TT_C1980"/>
<dbReference type="eggNOG" id="COG0297">
    <property type="taxonomic scope" value="Bacteria"/>
</dbReference>
<dbReference type="HOGENOM" id="CLU_009583_18_5_0"/>
<dbReference type="OrthoDB" id="9808590at2"/>
<dbReference type="UniPathway" id="UPA00164"/>
<dbReference type="Proteomes" id="UP000000592">
    <property type="component" value="Chromosome"/>
</dbReference>
<dbReference type="GO" id="GO:0009011">
    <property type="term" value="F:alpha-1,4-glucan glucosyltransferase (ADP-glucose donor) activity"/>
    <property type="evidence" value="ECO:0007669"/>
    <property type="project" value="UniProtKB-UniRule"/>
</dbReference>
<dbReference type="GO" id="GO:0004373">
    <property type="term" value="F:alpha-1,4-glucan glucosyltransferase (UDP-glucose donor) activity"/>
    <property type="evidence" value="ECO:0007669"/>
    <property type="project" value="InterPro"/>
</dbReference>
<dbReference type="GO" id="GO:0005978">
    <property type="term" value="P:glycogen biosynthetic process"/>
    <property type="evidence" value="ECO:0007669"/>
    <property type="project" value="UniProtKB-UniRule"/>
</dbReference>
<dbReference type="CDD" id="cd03791">
    <property type="entry name" value="GT5_Glycogen_synthase_DULL1-like"/>
    <property type="match status" value="1"/>
</dbReference>
<dbReference type="Gene3D" id="3.40.50.2000">
    <property type="entry name" value="Glycogen Phosphorylase B"/>
    <property type="match status" value="2"/>
</dbReference>
<dbReference type="HAMAP" id="MF_00484">
    <property type="entry name" value="Glycogen_synth"/>
    <property type="match status" value="1"/>
</dbReference>
<dbReference type="InterPro" id="IPR001296">
    <property type="entry name" value="Glyco_trans_1"/>
</dbReference>
<dbReference type="InterPro" id="IPR011835">
    <property type="entry name" value="GS/SS"/>
</dbReference>
<dbReference type="InterPro" id="IPR013534">
    <property type="entry name" value="Starch_synth_cat_dom"/>
</dbReference>
<dbReference type="NCBIfam" id="TIGR02095">
    <property type="entry name" value="glgA"/>
    <property type="match status" value="1"/>
</dbReference>
<dbReference type="PANTHER" id="PTHR45825:SF11">
    <property type="entry name" value="ALPHA AMYLASE DOMAIN-CONTAINING PROTEIN"/>
    <property type="match status" value="1"/>
</dbReference>
<dbReference type="PANTHER" id="PTHR45825">
    <property type="entry name" value="GRANULE-BOUND STARCH SYNTHASE 1, CHLOROPLASTIC/AMYLOPLASTIC"/>
    <property type="match status" value="1"/>
</dbReference>
<dbReference type="Pfam" id="PF08323">
    <property type="entry name" value="Glyco_transf_5"/>
    <property type="match status" value="1"/>
</dbReference>
<dbReference type="Pfam" id="PF00534">
    <property type="entry name" value="Glycos_transf_1"/>
    <property type="match status" value="1"/>
</dbReference>
<dbReference type="SUPFAM" id="SSF53756">
    <property type="entry name" value="UDP-Glycosyltransferase/glycogen phosphorylase"/>
    <property type="match status" value="1"/>
</dbReference>
<keyword id="KW-0320">Glycogen biosynthesis</keyword>
<keyword id="KW-0328">Glycosyltransferase</keyword>
<keyword id="KW-0808">Transferase</keyword>
<comment type="function">
    <text evidence="1">Synthesizes alpha-1,4-glucan chains using ADP-glucose.</text>
</comment>
<comment type="catalytic activity">
    <reaction evidence="1">
        <text>[(1-&gt;4)-alpha-D-glucosyl](n) + ADP-alpha-D-glucose = [(1-&gt;4)-alpha-D-glucosyl](n+1) + ADP + H(+)</text>
        <dbReference type="Rhea" id="RHEA:18189"/>
        <dbReference type="Rhea" id="RHEA-COMP:9584"/>
        <dbReference type="Rhea" id="RHEA-COMP:9587"/>
        <dbReference type="ChEBI" id="CHEBI:15378"/>
        <dbReference type="ChEBI" id="CHEBI:15444"/>
        <dbReference type="ChEBI" id="CHEBI:57498"/>
        <dbReference type="ChEBI" id="CHEBI:456216"/>
        <dbReference type="EC" id="2.4.1.21"/>
    </reaction>
</comment>
<comment type="pathway">
    <text evidence="1">Glycan biosynthesis; glycogen biosynthesis.</text>
</comment>
<comment type="similarity">
    <text evidence="1">Belongs to the glycosyltransferase 1 family. Bacterial/plant glycogen synthase subfamily.</text>
</comment>
<comment type="sequence caution" evidence="2">
    <conflict type="erroneous initiation">
        <sequence resource="EMBL-CDS" id="AAS82322"/>
    </conflict>
</comment>
<protein>
    <recommendedName>
        <fullName evidence="1">Glycogen synthase</fullName>
        <ecNumber evidence="1">2.4.1.21</ecNumber>
    </recommendedName>
    <alternativeName>
        <fullName evidence="1">Starch [bacterial glycogen] synthase</fullName>
    </alternativeName>
</protein>
<proteinExistence type="inferred from homology"/>
<organism>
    <name type="scientific">Thermus thermophilus (strain ATCC BAA-163 / DSM 7039 / HB27)</name>
    <dbReference type="NCBI Taxonomy" id="262724"/>
    <lineage>
        <taxon>Bacteria</taxon>
        <taxon>Thermotogati</taxon>
        <taxon>Deinococcota</taxon>
        <taxon>Deinococci</taxon>
        <taxon>Thermales</taxon>
        <taxon>Thermaceae</taxon>
        <taxon>Thermus</taxon>
    </lineage>
</organism>
<feature type="chain" id="PRO_0000230267" description="Glycogen synthase">
    <location>
        <begin position="1"/>
        <end position="437"/>
    </location>
</feature>
<feature type="binding site" evidence="1">
    <location>
        <position position="15"/>
    </location>
    <ligand>
        <name>ADP-alpha-D-glucose</name>
        <dbReference type="ChEBI" id="CHEBI:57498"/>
    </ligand>
</feature>
<reference key="1">
    <citation type="journal article" date="2004" name="Nat. Biotechnol.">
        <title>The genome sequence of the extreme thermophile Thermus thermophilus.</title>
        <authorList>
            <person name="Henne A."/>
            <person name="Brueggemann H."/>
            <person name="Raasch C."/>
            <person name="Wiezer A."/>
            <person name="Hartsch T."/>
            <person name="Liesegang H."/>
            <person name="Johann A."/>
            <person name="Lienard T."/>
            <person name="Gohl O."/>
            <person name="Martinez-Arias R."/>
            <person name="Jacobi C."/>
            <person name="Starkuviene V."/>
            <person name="Schlenczeck S."/>
            <person name="Dencker S."/>
            <person name="Huber R."/>
            <person name="Klenk H.-P."/>
            <person name="Kramer W."/>
            <person name="Merkl R."/>
            <person name="Gottschalk G."/>
            <person name="Fritz H.-J."/>
        </authorList>
    </citation>
    <scope>NUCLEOTIDE SEQUENCE [LARGE SCALE GENOMIC DNA]</scope>
    <source>
        <strain>ATCC BAA-163 / DSM 7039 / HB27</strain>
    </source>
</reference>
<gene>
    <name evidence="1" type="primary">glgA</name>
    <name type="ordered locus">TT_C1980</name>
</gene>
<evidence type="ECO:0000255" key="1">
    <source>
        <dbReference type="HAMAP-Rule" id="MF_00484"/>
    </source>
</evidence>
<evidence type="ECO:0000305" key="2"/>
<accession>Q72G68</accession>